<proteinExistence type="inferred from homology"/>
<dbReference type="EMBL" id="AE009439">
    <property type="protein sequence ID" value="AAM02832.1"/>
    <property type="molecule type" value="Genomic_DNA"/>
</dbReference>
<dbReference type="RefSeq" id="WP_011019987.1">
    <property type="nucleotide sequence ID" value="NC_003551.1"/>
</dbReference>
<dbReference type="SMR" id="Q8TUY2"/>
<dbReference type="FunCoup" id="Q8TUY2">
    <property type="interactions" value="86"/>
</dbReference>
<dbReference type="STRING" id="190192.MK1619"/>
<dbReference type="PaxDb" id="190192-MK1619"/>
<dbReference type="EnsemblBacteria" id="AAM02832">
    <property type="protein sequence ID" value="AAM02832"/>
    <property type="gene ID" value="MK1619"/>
</dbReference>
<dbReference type="GeneID" id="1478214"/>
<dbReference type="KEGG" id="mka:MK1619"/>
<dbReference type="PATRIC" id="fig|190192.8.peg.1782"/>
<dbReference type="HOGENOM" id="CLU_122978_3_0_2"/>
<dbReference type="InParanoid" id="Q8TUY2"/>
<dbReference type="OrthoDB" id="7912at2157"/>
<dbReference type="Proteomes" id="UP000001826">
    <property type="component" value="Chromosome"/>
</dbReference>
<dbReference type="GO" id="GO:0005829">
    <property type="term" value="C:cytosol"/>
    <property type="evidence" value="ECO:0007669"/>
    <property type="project" value="TreeGrafter"/>
</dbReference>
<dbReference type="GO" id="GO:0003677">
    <property type="term" value="F:DNA binding"/>
    <property type="evidence" value="ECO:0007669"/>
    <property type="project" value="UniProtKB-UniRule"/>
</dbReference>
<dbReference type="Gene3D" id="1.10.8.140">
    <property type="entry name" value="PDCD5-like"/>
    <property type="match status" value="1"/>
</dbReference>
<dbReference type="HAMAP" id="MF_00026">
    <property type="entry name" value="dsDNA_bind"/>
    <property type="match status" value="1"/>
</dbReference>
<dbReference type="InterPro" id="IPR022889">
    <property type="entry name" value="DNA_bind_arc"/>
</dbReference>
<dbReference type="InterPro" id="IPR002836">
    <property type="entry name" value="PDCD5-like"/>
</dbReference>
<dbReference type="InterPro" id="IPR036883">
    <property type="entry name" value="PDCD5-like_sf"/>
</dbReference>
<dbReference type="NCBIfam" id="NF003268">
    <property type="entry name" value="PRK04239.1"/>
    <property type="match status" value="1"/>
</dbReference>
<dbReference type="PANTHER" id="PTHR10840">
    <property type="entry name" value="PROGRAMMED CELL DEATH PROTEIN 5"/>
    <property type="match status" value="1"/>
</dbReference>
<dbReference type="PANTHER" id="PTHR10840:SF0">
    <property type="entry name" value="PROGRAMMED CELL DEATH PROTEIN 5"/>
    <property type="match status" value="1"/>
</dbReference>
<dbReference type="Pfam" id="PF01984">
    <property type="entry name" value="dsDNA_bind"/>
    <property type="match status" value="1"/>
</dbReference>
<dbReference type="PIRSF" id="PIRSF015730">
    <property type="entry name" value="TFAR19"/>
    <property type="match status" value="1"/>
</dbReference>
<dbReference type="SUPFAM" id="SSF46950">
    <property type="entry name" value="Double-stranded DNA-binding domain"/>
    <property type="match status" value="1"/>
</dbReference>
<protein>
    <recommendedName>
        <fullName evidence="1">DNA-binding protein MK1619</fullName>
    </recommendedName>
</protein>
<keyword id="KW-0238">DNA-binding</keyword>
<keyword id="KW-1185">Reference proteome</keyword>
<sequence>MTDPELERIRRKKIMELQRKLEESQEKKVEEEREKKALEEAQRRAMLRRILTPEARERLARVRLARPQLAQAVENYLLQLAQTGQLKEKIDEDQLKRILKQVSDATRKEYRIRFKRK</sequence>
<name>Y1619_METKA</name>
<reference key="1">
    <citation type="journal article" date="2002" name="Proc. Natl. Acad. Sci. U.S.A.">
        <title>The complete genome of hyperthermophile Methanopyrus kandleri AV19 and monophyly of archaeal methanogens.</title>
        <authorList>
            <person name="Slesarev A.I."/>
            <person name="Mezhevaya K.V."/>
            <person name="Makarova K.S."/>
            <person name="Polushin N.N."/>
            <person name="Shcherbinina O.V."/>
            <person name="Shakhova V.V."/>
            <person name="Belova G.I."/>
            <person name="Aravind L."/>
            <person name="Natale D.A."/>
            <person name="Rogozin I.B."/>
            <person name="Tatusov R.L."/>
            <person name="Wolf Y.I."/>
            <person name="Stetter K.O."/>
            <person name="Malykh A.G."/>
            <person name="Koonin E.V."/>
            <person name="Kozyavkin S.A."/>
        </authorList>
    </citation>
    <scope>NUCLEOTIDE SEQUENCE [LARGE SCALE GENOMIC DNA]</scope>
    <source>
        <strain>AV19 / DSM 6324 / JCM 9639 / NBRC 100938</strain>
    </source>
</reference>
<evidence type="ECO:0000255" key="1">
    <source>
        <dbReference type="HAMAP-Rule" id="MF_00026"/>
    </source>
</evidence>
<accession>Q8TUY2</accession>
<gene>
    <name type="ordered locus">MK1619</name>
</gene>
<feature type="chain" id="PRO_0000121556" description="DNA-binding protein MK1619">
    <location>
        <begin position="1"/>
        <end position="117"/>
    </location>
</feature>
<organism>
    <name type="scientific">Methanopyrus kandleri (strain AV19 / DSM 6324 / JCM 9639 / NBRC 100938)</name>
    <dbReference type="NCBI Taxonomy" id="190192"/>
    <lineage>
        <taxon>Archaea</taxon>
        <taxon>Methanobacteriati</taxon>
        <taxon>Methanobacteriota</taxon>
        <taxon>Methanomada group</taxon>
        <taxon>Methanopyri</taxon>
        <taxon>Methanopyrales</taxon>
        <taxon>Methanopyraceae</taxon>
        <taxon>Methanopyrus</taxon>
    </lineage>
</organism>
<comment type="similarity">
    <text evidence="1">Belongs to the PDCD5 family.</text>
</comment>